<name>RK23_STIHE</name>
<feature type="chain" id="PRO_0000272937" description="Large ribosomal subunit protein uL23c">
    <location>
        <begin position="1"/>
        <end position="118"/>
    </location>
</feature>
<evidence type="ECO:0000250" key="1"/>
<evidence type="ECO:0000305" key="2"/>
<geneLocation type="chloroplast"/>
<protein>
    <recommendedName>
        <fullName evidence="2">Large ribosomal subunit protein uL23c</fullName>
    </recommendedName>
    <alternativeName>
        <fullName>50S ribosomal protein L23, chloroplastic</fullName>
    </alternativeName>
</protein>
<organism>
    <name type="scientific">Stigeoclonium helveticum</name>
    <name type="common">Green alga</name>
    <dbReference type="NCBI Taxonomy" id="55999"/>
    <lineage>
        <taxon>Eukaryota</taxon>
        <taxon>Viridiplantae</taxon>
        <taxon>Chlorophyta</taxon>
        <taxon>core chlorophytes</taxon>
        <taxon>Chlorophyceae</taxon>
        <taxon>OCC clade</taxon>
        <taxon>Chaetophorales</taxon>
        <taxon>Chaetophoraceae</taxon>
        <taxon>Stigeoclonium</taxon>
    </lineage>
</organism>
<reference key="1">
    <citation type="journal article" date="2006" name="Mol. Genet. Genomics">
        <title>Distinctive architecture of the chloroplast genome in the chlorophycean green alga Stigeoclonium helveticum.</title>
        <authorList>
            <person name="Belanger A.-S."/>
            <person name="Brouard J.-S."/>
            <person name="Charlebois P."/>
            <person name="Otis C."/>
            <person name="Lemieux C."/>
            <person name="Turmel M."/>
        </authorList>
    </citation>
    <scope>NUCLEOTIDE SEQUENCE [LARGE SCALE GENOMIC DNA]</scope>
    <source>
        <strain>UTEX 441</strain>
    </source>
</reference>
<dbReference type="EMBL" id="DQ630521">
    <property type="protein sequence ID" value="ABF60185.1"/>
    <property type="molecule type" value="Genomic_DNA"/>
</dbReference>
<dbReference type="RefSeq" id="YP_764389.1">
    <property type="nucleotide sequence ID" value="NC_008372.1"/>
</dbReference>
<dbReference type="SMR" id="Q06SH7"/>
<dbReference type="GeneID" id="4308365"/>
<dbReference type="GO" id="GO:0009507">
    <property type="term" value="C:chloroplast"/>
    <property type="evidence" value="ECO:0007669"/>
    <property type="project" value="UniProtKB-SubCell"/>
</dbReference>
<dbReference type="GO" id="GO:1990904">
    <property type="term" value="C:ribonucleoprotein complex"/>
    <property type="evidence" value="ECO:0007669"/>
    <property type="project" value="UniProtKB-KW"/>
</dbReference>
<dbReference type="GO" id="GO:0005840">
    <property type="term" value="C:ribosome"/>
    <property type="evidence" value="ECO:0007669"/>
    <property type="project" value="UniProtKB-KW"/>
</dbReference>
<dbReference type="GO" id="GO:0019843">
    <property type="term" value="F:rRNA binding"/>
    <property type="evidence" value="ECO:0007669"/>
    <property type="project" value="UniProtKB-UniRule"/>
</dbReference>
<dbReference type="GO" id="GO:0003735">
    <property type="term" value="F:structural constituent of ribosome"/>
    <property type="evidence" value="ECO:0007669"/>
    <property type="project" value="InterPro"/>
</dbReference>
<dbReference type="GO" id="GO:0006412">
    <property type="term" value="P:translation"/>
    <property type="evidence" value="ECO:0007669"/>
    <property type="project" value="UniProtKB-UniRule"/>
</dbReference>
<dbReference type="Gene3D" id="3.30.70.330">
    <property type="match status" value="1"/>
</dbReference>
<dbReference type="HAMAP" id="MF_01369_B">
    <property type="entry name" value="Ribosomal_uL23_B"/>
    <property type="match status" value="1"/>
</dbReference>
<dbReference type="InterPro" id="IPR012677">
    <property type="entry name" value="Nucleotide-bd_a/b_plait_sf"/>
</dbReference>
<dbReference type="InterPro" id="IPR013025">
    <property type="entry name" value="Ribosomal_uL23-like"/>
</dbReference>
<dbReference type="InterPro" id="IPR012678">
    <property type="entry name" value="Ribosomal_uL23/eL15/eS24_sf"/>
</dbReference>
<dbReference type="PANTHER" id="PTHR11620">
    <property type="entry name" value="60S RIBOSOMAL PROTEIN L23A"/>
    <property type="match status" value="1"/>
</dbReference>
<dbReference type="Pfam" id="PF00276">
    <property type="entry name" value="Ribosomal_L23"/>
    <property type="match status" value="1"/>
</dbReference>
<dbReference type="SUPFAM" id="SSF54189">
    <property type="entry name" value="Ribosomal proteins S24e, L23 and L15e"/>
    <property type="match status" value="1"/>
</dbReference>
<proteinExistence type="inferred from homology"/>
<sequence length="118" mass="13889">MIDLIKYPVINFKSYRALVLNNQYMFNVDLRLTKPQIKKLIEQYFEVNVISVNTHRPPRKKRLYIQTSPGYKKRYKRVIITLQKDQEIPYIKSLMASNLAAAMQRVQNAQTSPNSNEA</sequence>
<keyword id="KW-0150">Chloroplast</keyword>
<keyword id="KW-0934">Plastid</keyword>
<keyword id="KW-0687">Ribonucleoprotein</keyword>
<keyword id="KW-0689">Ribosomal protein</keyword>
<keyword id="KW-0694">RNA-binding</keyword>
<keyword id="KW-0699">rRNA-binding</keyword>
<comment type="function">
    <text evidence="1">Binds to 23S rRNA.</text>
</comment>
<comment type="subunit">
    <text evidence="1">Part of the 50S ribosomal subunit.</text>
</comment>
<comment type="subcellular location">
    <subcellularLocation>
        <location>Plastid</location>
        <location>Chloroplast</location>
    </subcellularLocation>
</comment>
<comment type="similarity">
    <text evidence="2">Belongs to the universal ribosomal protein uL23 family.</text>
</comment>
<accession>Q06SH7</accession>
<gene>
    <name type="primary">rpl23</name>
</gene>